<evidence type="ECO:0000255" key="1"/>
<evidence type="ECO:0000305" key="2"/>
<reference key="1">
    <citation type="journal article" date="2004" name="Microbiology">
        <title>Enzymes and genes of taurine and isethionate dissimilation in Paracoccus denitrificans.</title>
        <authorList>
            <person name="Brueggemann C."/>
            <person name="Denger K."/>
            <person name="Cook A.M."/>
            <person name="Ruff J."/>
        </authorList>
    </citation>
    <scope>NUCLEOTIDE SEQUENCE [GENOMIC DNA]</scope>
    <source>
        <strain>NKNIS</strain>
    </source>
</reference>
<gene>
    <name type="primary">tauZ</name>
</gene>
<protein>
    <recommendedName>
        <fullName>UPF0324 membrane protein TauZ</fullName>
    </recommendedName>
</protein>
<feature type="chain" id="PRO_0000157433" description="UPF0324 membrane protein TauZ">
    <location>
        <begin position="1"/>
        <end position="338"/>
    </location>
</feature>
<feature type="transmembrane region" description="Helical" evidence="1">
    <location>
        <begin position="12"/>
        <end position="31"/>
    </location>
</feature>
<feature type="transmembrane region" description="Helical" evidence="1">
    <location>
        <begin position="36"/>
        <end position="55"/>
    </location>
</feature>
<feature type="transmembrane region" description="Helical" evidence="1">
    <location>
        <begin position="75"/>
        <end position="92"/>
    </location>
</feature>
<feature type="transmembrane region" description="Helical" evidence="1">
    <location>
        <begin position="96"/>
        <end position="118"/>
    </location>
</feature>
<feature type="transmembrane region" description="Helical" evidence="1">
    <location>
        <begin position="125"/>
        <end position="147"/>
    </location>
</feature>
<feature type="transmembrane region" description="Helical" evidence="1">
    <location>
        <begin position="162"/>
        <end position="184"/>
    </location>
</feature>
<feature type="transmembrane region" description="Helical" evidence="1">
    <location>
        <begin position="191"/>
        <end position="213"/>
    </location>
</feature>
<feature type="transmembrane region" description="Helical" evidence="1">
    <location>
        <begin position="223"/>
        <end position="245"/>
    </location>
</feature>
<feature type="transmembrane region" description="Helical" evidence="1">
    <location>
        <begin position="258"/>
        <end position="280"/>
    </location>
</feature>
<feature type="transmembrane region" description="Helical" evidence="1">
    <location>
        <begin position="315"/>
        <end position="337"/>
    </location>
</feature>
<comment type="subcellular location">
    <subcellularLocation>
        <location evidence="2">Cell membrane</location>
        <topology evidence="2">Multi-pass membrane protein</topology>
    </subcellularLocation>
</comment>
<comment type="similarity">
    <text evidence="2">Belongs to the UPF0324 family.</text>
</comment>
<proteinExistence type="inferred from homology"/>
<name>TAUZ_PARDE</name>
<organism>
    <name type="scientific">Paracoccus denitrificans</name>
    <dbReference type="NCBI Taxonomy" id="266"/>
    <lineage>
        <taxon>Bacteria</taxon>
        <taxon>Pseudomonadati</taxon>
        <taxon>Pseudomonadota</taxon>
        <taxon>Alphaproteobacteria</taxon>
        <taxon>Rhodobacterales</taxon>
        <taxon>Paracoccaceae</taxon>
        <taxon>Paracoccus</taxon>
    </lineage>
</organism>
<keyword id="KW-1003">Cell membrane</keyword>
<keyword id="KW-0472">Membrane</keyword>
<keyword id="KW-0812">Transmembrane</keyword>
<keyword id="KW-1133">Transmembrane helix</keyword>
<dbReference type="EMBL" id="AY498613">
    <property type="protein sequence ID" value="AAS78783.1"/>
    <property type="molecule type" value="Genomic_DNA"/>
</dbReference>
<dbReference type="RefSeq" id="WP_011747340.1">
    <property type="nucleotide sequence ID" value="NZ_PPGA01000004.1"/>
</dbReference>
<dbReference type="SMR" id="Q6RH59"/>
<dbReference type="TCDB" id="2.A.98.1.2">
    <property type="family name" value="the putative sulfate exporter (pse) family"/>
</dbReference>
<dbReference type="OMA" id="NDLRTWF"/>
<dbReference type="GO" id="GO:0005886">
    <property type="term" value="C:plasma membrane"/>
    <property type="evidence" value="ECO:0007669"/>
    <property type="project" value="UniProtKB-SubCell"/>
</dbReference>
<dbReference type="InterPro" id="IPR018383">
    <property type="entry name" value="UPF0324_pro"/>
</dbReference>
<dbReference type="PANTHER" id="PTHR30106">
    <property type="entry name" value="INNER MEMBRANE PROTEIN YEIH-RELATED"/>
    <property type="match status" value="1"/>
</dbReference>
<dbReference type="PANTHER" id="PTHR30106:SF2">
    <property type="entry name" value="UPF0324 INNER MEMBRANE PROTEIN YEIH"/>
    <property type="match status" value="1"/>
</dbReference>
<dbReference type="Pfam" id="PF03601">
    <property type="entry name" value="Cons_hypoth698"/>
    <property type="match status" value="1"/>
</dbReference>
<sequence>MISTMIPSRGLIEAAFPGFAVSALVAATAQFLSDHYGAPAMLLALLLGLALNFLAEDGTRTAPGVAFTARTVLRLGVALLGARISAGMLAALGPGAIALVAAGVVLTILFALAASRLVGRGWRFALLTGGSVAICGASAAMAIAAVLPRHEKSERDLVFTVLSVTVLSTVAMVLYPMLAGFFGFTARDSGVFLGGTIHDVAQVVGAGFSIGPEAGETATLVKLIRVSMLAPVVLCFSLAIRARGLADSRGGKAPPLLPGFVIGFLVLAALNSLGLVPAAVSELAGQLSRWALLIAIAAVGIKTSLKKMFEVGTGAIALILAETVFLAVFVTIGLHVLG</sequence>
<accession>Q6RH59</accession>